<evidence type="ECO:0000255" key="1">
    <source>
        <dbReference type="HAMAP-Rule" id="MF_00006"/>
    </source>
</evidence>
<gene>
    <name evidence="1" type="primary">argH</name>
    <name type="ordered locus">Mbar_A0004</name>
</gene>
<protein>
    <recommendedName>
        <fullName evidence="1">Argininosuccinate lyase</fullName>
        <shortName evidence="1">ASAL</shortName>
        <ecNumber evidence="1">4.3.2.1</ecNumber>
    </recommendedName>
    <alternativeName>
        <fullName evidence="1">Arginosuccinase</fullName>
    </alternativeName>
</protein>
<name>ARLY_METBF</name>
<feature type="chain" id="PRO_0000240790" description="Argininosuccinate lyase">
    <location>
        <begin position="1"/>
        <end position="491"/>
    </location>
</feature>
<dbReference type="EC" id="4.3.2.1" evidence="1"/>
<dbReference type="EMBL" id="CP000099">
    <property type="protein sequence ID" value="AAZ68997.1"/>
    <property type="molecule type" value="Genomic_DNA"/>
</dbReference>
<dbReference type="SMR" id="Q46GJ5"/>
<dbReference type="STRING" id="269797.Mbar_A0004"/>
<dbReference type="PaxDb" id="269797-Mbar_A0004"/>
<dbReference type="KEGG" id="mba:Mbar_A0004"/>
<dbReference type="eggNOG" id="arCOG01748">
    <property type="taxonomic scope" value="Archaea"/>
</dbReference>
<dbReference type="HOGENOM" id="CLU_027272_2_3_2"/>
<dbReference type="OrthoDB" id="27337at2157"/>
<dbReference type="UniPathway" id="UPA00068">
    <property type="reaction ID" value="UER00114"/>
</dbReference>
<dbReference type="GO" id="GO:0005829">
    <property type="term" value="C:cytosol"/>
    <property type="evidence" value="ECO:0007669"/>
    <property type="project" value="TreeGrafter"/>
</dbReference>
<dbReference type="GO" id="GO:0004056">
    <property type="term" value="F:argininosuccinate lyase activity"/>
    <property type="evidence" value="ECO:0007669"/>
    <property type="project" value="UniProtKB-UniRule"/>
</dbReference>
<dbReference type="GO" id="GO:0042450">
    <property type="term" value="P:arginine biosynthetic process via ornithine"/>
    <property type="evidence" value="ECO:0007669"/>
    <property type="project" value="InterPro"/>
</dbReference>
<dbReference type="GO" id="GO:0006526">
    <property type="term" value="P:L-arginine biosynthetic process"/>
    <property type="evidence" value="ECO:0007669"/>
    <property type="project" value="UniProtKB-UniRule"/>
</dbReference>
<dbReference type="CDD" id="cd01359">
    <property type="entry name" value="Argininosuccinate_lyase"/>
    <property type="match status" value="1"/>
</dbReference>
<dbReference type="FunFam" id="1.20.200.10:FF:000015">
    <property type="entry name" value="argininosuccinate lyase isoform X2"/>
    <property type="match status" value="1"/>
</dbReference>
<dbReference type="Gene3D" id="1.10.40.30">
    <property type="entry name" value="Fumarase/aspartase (C-terminal domain)"/>
    <property type="match status" value="1"/>
</dbReference>
<dbReference type="Gene3D" id="1.20.200.10">
    <property type="entry name" value="Fumarase/aspartase (Central domain)"/>
    <property type="match status" value="1"/>
</dbReference>
<dbReference type="Gene3D" id="1.10.275.10">
    <property type="entry name" value="Fumarase/aspartase (N-terminal domain)"/>
    <property type="match status" value="1"/>
</dbReference>
<dbReference type="HAMAP" id="MF_00006">
    <property type="entry name" value="Arg_succ_lyase"/>
    <property type="match status" value="1"/>
</dbReference>
<dbReference type="InterPro" id="IPR029419">
    <property type="entry name" value="Arg_succ_lyase_C"/>
</dbReference>
<dbReference type="InterPro" id="IPR009049">
    <property type="entry name" value="Argininosuccinate_lyase"/>
</dbReference>
<dbReference type="InterPro" id="IPR024083">
    <property type="entry name" value="Fumarase/histidase_N"/>
</dbReference>
<dbReference type="InterPro" id="IPR000362">
    <property type="entry name" value="Fumarate_lyase_fam"/>
</dbReference>
<dbReference type="InterPro" id="IPR022761">
    <property type="entry name" value="Fumarate_lyase_N"/>
</dbReference>
<dbReference type="InterPro" id="IPR008948">
    <property type="entry name" value="L-Aspartase-like"/>
</dbReference>
<dbReference type="NCBIfam" id="TIGR00838">
    <property type="entry name" value="argH"/>
    <property type="match status" value="1"/>
</dbReference>
<dbReference type="PANTHER" id="PTHR43814">
    <property type="entry name" value="ARGININOSUCCINATE LYASE"/>
    <property type="match status" value="1"/>
</dbReference>
<dbReference type="PANTHER" id="PTHR43814:SF1">
    <property type="entry name" value="ARGININOSUCCINATE LYASE"/>
    <property type="match status" value="1"/>
</dbReference>
<dbReference type="Pfam" id="PF14698">
    <property type="entry name" value="ASL_C2"/>
    <property type="match status" value="1"/>
</dbReference>
<dbReference type="Pfam" id="PF00206">
    <property type="entry name" value="Lyase_1"/>
    <property type="match status" value="1"/>
</dbReference>
<dbReference type="PRINTS" id="PR00145">
    <property type="entry name" value="ARGSUCLYASE"/>
</dbReference>
<dbReference type="PRINTS" id="PR00149">
    <property type="entry name" value="FUMRATELYASE"/>
</dbReference>
<dbReference type="SUPFAM" id="SSF48557">
    <property type="entry name" value="L-aspartase-like"/>
    <property type="match status" value="1"/>
</dbReference>
<sequence>MSNILRRGRLEAAQDEEILRYTSSMEADRWIFDADIAVDLAHTVMLKEQGIINREDCSKILSGLLKIREEGMEKLDFSYEDIHISLESRLIDMVGEDVGGRMHSGRSRNDEVATCIRLVLREELTGLLEEIHELRQALLTLAEKHTETLMPGFTHMQHAQPTTLAHHLCAHEAALGRDFDRIQDAYSRVNLCPLGAAAFASTGFNLNRKRTQELLGFDGLLENSMDAVSTRDFLIECASGFTNLMINLSRMAEELVIWSSSEFNFIELDDMYASTSSIMPQKKNPDTAELMRGKTGVAVGALMSLITICKGLPLSYNRDLQEATPNLWRSVETVRASVRIMEGMIKTMKVRPEVLVAQSVTGFTTATELADTFVRETGIPFRTAHQIVGMLAREMEKPTLKKIDSVAEIVLGESLSSRGLKEKMVKEALNPFSNVEIRKIAGGPAPEEMRNYLSKRQTELELNRQEIATLKDITDSAFENLLATVNEYRQA</sequence>
<accession>Q46GJ5</accession>
<keyword id="KW-0028">Amino-acid biosynthesis</keyword>
<keyword id="KW-0055">Arginine biosynthesis</keyword>
<keyword id="KW-0963">Cytoplasm</keyword>
<keyword id="KW-0456">Lyase</keyword>
<reference key="1">
    <citation type="journal article" date="2006" name="J. Bacteriol.">
        <title>The Methanosarcina barkeri genome: comparative analysis with Methanosarcina acetivorans and Methanosarcina mazei reveals extensive rearrangement within methanosarcinal genomes.</title>
        <authorList>
            <person name="Maeder D.L."/>
            <person name="Anderson I."/>
            <person name="Brettin T.S."/>
            <person name="Bruce D.C."/>
            <person name="Gilna P."/>
            <person name="Han C.S."/>
            <person name="Lapidus A."/>
            <person name="Metcalf W.W."/>
            <person name="Saunders E."/>
            <person name="Tapia R."/>
            <person name="Sowers K.R."/>
        </authorList>
    </citation>
    <scope>NUCLEOTIDE SEQUENCE [LARGE SCALE GENOMIC DNA]</scope>
    <source>
        <strain>Fusaro / DSM 804</strain>
    </source>
</reference>
<organism>
    <name type="scientific">Methanosarcina barkeri (strain Fusaro / DSM 804)</name>
    <dbReference type="NCBI Taxonomy" id="269797"/>
    <lineage>
        <taxon>Archaea</taxon>
        <taxon>Methanobacteriati</taxon>
        <taxon>Methanobacteriota</taxon>
        <taxon>Stenosarchaea group</taxon>
        <taxon>Methanomicrobia</taxon>
        <taxon>Methanosarcinales</taxon>
        <taxon>Methanosarcinaceae</taxon>
        <taxon>Methanosarcina</taxon>
    </lineage>
</organism>
<proteinExistence type="inferred from homology"/>
<comment type="catalytic activity">
    <reaction evidence="1">
        <text>2-(N(omega)-L-arginino)succinate = fumarate + L-arginine</text>
        <dbReference type="Rhea" id="RHEA:24020"/>
        <dbReference type="ChEBI" id="CHEBI:29806"/>
        <dbReference type="ChEBI" id="CHEBI:32682"/>
        <dbReference type="ChEBI" id="CHEBI:57472"/>
        <dbReference type="EC" id="4.3.2.1"/>
    </reaction>
</comment>
<comment type="pathway">
    <text evidence="1">Amino-acid biosynthesis; L-arginine biosynthesis; L-arginine from L-ornithine and carbamoyl phosphate: step 3/3.</text>
</comment>
<comment type="subcellular location">
    <subcellularLocation>
        <location evidence="1">Cytoplasm</location>
    </subcellularLocation>
</comment>
<comment type="similarity">
    <text evidence="1">Belongs to the lyase 1 family. Argininosuccinate lyase subfamily.</text>
</comment>